<name>Y1254_METJA</name>
<accession>Q58651</accession>
<protein>
    <recommendedName>
        <fullName>Uncharacterized protein MJ1254</fullName>
    </recommendedName>
</protein>
<sequence>MIAFLFYKCFAKNYKINFLYKNSSYINTNTLWLKVIYIKTKDVIIFLLLFFVAFNVSSAYVIKNLNIDCIVTPDDTINETISFVIYNNEDKNLSHISYTIPQTIRNFTINASAGVKGYSALYNEGVTEIAIEFEKPIPKGGYTNITINCFVNDAIWTKNGIKQLILSFPITSKNATIKIVLPPGAVILSPQGTLLVTPSGYKITTDGKHQIIVWDLSLNKEITFTITVKYTFISYPGQNIIEQPAINNNLKYLLIIAIFGTAIFGGLFVKEKISKRKIIERTKNIKNELTSLKNKLKEKEEEIKNLAIKIKDLEDKLSKANKNLLNKDEIISVLNERISEYESQIQKLLDENIIYKEKIESLNKYIETLKKENDKLKDKVRELSDIAKKYMEEKRGVLWSFLTEDEKIIIDLIKKHGHITQKEIVEITGMSKPKVSRIISELEDRKIIRKEKIGRINKLTLTEESKKLL</sequence>
<comment type="subcellular location">
    <subcellularLocation>
        <location evidence="2">Cell membrane</location>
        <topology evidence="2">Multi-pass membrane protein</topology>
    </subcellularLocation>
</comment>
<organism>
    <name type="scientific">Methanocaldococcus jannaschii (strain ATCC 43067 / DSM 2661 / JAL-1 / JCM 10045 / NBRC 100440)</name>
    <name type="common">Methanococcus jannaschii</name>
    <dbReference type="NCBI Taxonomy" id="243232"/>
    <lineage>
        <taxon>Archaea</taxon>
        <taxon>Methanobacteriati</taxon>
        <taxon>Methanobacteriota</taxon>
        <taxon>Methanomada group</taxon>
        <taxon>Methanococci</taxon>
        <taxon>Methanococcales</taxon>
        <taxon>Methanocaldococcaceae</taxon>
        <taxon>Methanocaldococcus</taxon>
    </lineage>
</organism>
<keyword id="KW-1003">Cell membrane</keyword>
<keyword id="KW-0472">Membrane</keyword>
<keyword id="KW-1185">Reference proteome</keyword>
<keyword id="KW-0812">Transmembrane</keyword>
<keyword id="KW-1133">Transmembrane helix</keyword>
<reference key="1">
    <citation type="journal article" date="1996" name="Science">
        <title>Complete genome sequence of the methanogenic archaeon, Methanococcus jannaschii.</title>
        <authorList>
            <person name="Bult C.J."/>
            <person name="White O."/>
            <person name="Olsen G.J."/>
            <person name="Zhou L."/>
            <person name="Fleischmann R.D."/>
            <person name="Sutton G.G."/>
            <person name="Blake J.A."/>
            <person name="FitzGerald L.M."/>
            <person name="Clayton R.A."/>
            <person name="Gocayne J.D."/>
            <person name="Kerlavage A.R."/>
            <person name="Dougherty B.A."/>
            <person name="Tomb J.-F."/>
            <person name="Adams M.D."/>
            <person name="Reich C.I."/>
            <person name="Overbeek R."/>
            <person name="Kirkness E.F."/>
            <person name="Weinstock K.G."/>
            <person name="Merrick J.M."/>
            <person name="Glodek A."/>
            <person name="Scott J.L."/>
            <person name="Geoghagen N.S.M."/>
            <person name="Weidman J.F."/>
            <person name="Fuhrmann J.L."/>
            <person name="Nguyen D."/>
            <person name="Utterback T.R."/>
            <person name="Kelley J.M."/>
            <person name="Peterson J.D."/>
            <person name="Sadow P.W."/>
            <person name="Hanna M.C."/>
            <person name="Cotton M.D."/>
            <person name="Roberts K.M."/>
            <person name="Hurst M.A."/>
            <person name="Kaine B.P."/>
            <person name="Borodovsky M."/>
            <person name="Klenk H.-P."/>
            <person name="Fraser C.M."/>
            <person name="Smith H.O."/>
            <person name="Woese C.R."/>
            <person name="Venter J.C."/>
        </authorList>
    </citation>
    <scope>NUCLEOTIDE SEQUENCE [LARGE SCALE GENOMIC DNA]</scope>
    <source>
        <strain>ATCC 43067 / DSM 2661 / JAL-1 / JCM 10045 / NBRC 100440</strain>
    </source>
</reference>
<evidence type="ECO:0000255" key="1"/>
<evidence type="ECO:0000305" key="2"/>
<proteinExistence type="predicted"/>
<dbReference type="EMBL" id="L77117">
    <property type="protein sequence ID" value="AAB99266.1"/>
    <property type="molecule type" value="Genomic_DNA"/>
</dbReference>
<dbReference type="PIR" id="E64456">
    <property type="entry name" value="E64456"/>
</dbReference>
<dbReference type="SMR" id="Q58651"/>
<dbReference type="FunCoup" id="Q58651">
    <property type="interactions" value="4"/>
</dbReference>
<dbReference type="STRING" id="243232.MJ_1254"/>
<dbReference type="PaxDb" id="243232-MJ_1254"/>
<dbReference type="DNASU" id="1452152"/>
<dbReference type="EnsemblBacteria" id="AAB99266">
    <property type="protein sequence ID" value="AAB99266"/>
    <property type="gene ID" value="MJ_1254"/>
</dbReference>
<dbReference type="KEGG" id="mja:MJ_1254"/>
<dbReference type="eggNOG" id="arCOG00391">
    <property type="taxonomic scope" value="Archaea"/>
</dbReference>
<dbReference type="HOGENOM" id="CLU_637154_0_0_2"/>
<dbReference type="InParanoid" id="Q58651"/>
<dbReference type="OrthoDB" id="27885at2157"/>
<dbReference type="Proteomes" id="UP000000805">
    <property type="component" value="Chromosome"/>
</dbReference>
<dbReference type="GO" id="GO:0005886">
    <property type="term" value="C:plasma membrane"/>
    <property type="evidence" value="ECO:0007669"/>
    <property type="project" value="UniProtKB-SubCell"/>
</dbReference>
<dbReference type="CDD" id="cd00090">
    <property type="entry name" value="HTH_ARSR"/>
    <property type="match status" value="1"/>
</dbReference>
<dbReference type="Gene3D" id="1.10.287.1490">
    <property type="match status" value="1"/>
</dbReference>
<dbReference type="Gene3D" id="1.10.10.10">
    <property type="entry name" value="Winged helix-like DNA-binding domain superfamily/Winged helix DNA-binding domain"/>
    <property type="match status" value="1"/>
</dbReference>
<dbReference type="InterPro" id="IPR011991">
    <property type="entry name" value="ArsR-like_HTH"/>
</dbReference>
<dbReference type="InterPro" id="IPR055767">
    <property type="entry name" value="DUF7343"/>
</dbReference>
<dbReference type="InterPro" id="IPR036388">
    <property type="entry name" value="WH-like_DNA-bd_sf"/>
</dbReference>
<dbReference type="InterPro" id="IPR036390">
    <property type="entry name" value="WH_DNA-bd_sf"/>
</dbReference>
<dbReference type="Pfam" id="PF24034">
    <property type="entry name" value="DUF7343"/>
    <property type="match status" value="1"/>
</dbReference>
<dbReference type="SUPFAM" id="SSF58100">
    <property type="entry name" value="Bacterial hemolysins"/>
    <property type="match status" value="1"/>
</dbReference>
<dbReference type="SUPFAM" id="SSF46785">
    <property type="entry name" value="Winged helix' DNA-binding domain"/>
    <property type="match status" value="1"/>
</dbReference>
<feature type="chain" id="PRO_0000107242" description="Uncharacterized protein MJ1254">
    <location>
        <begin position="1"/>
        <end position="469"/>
    </location>
</feature>
<feature type="transmembrane region" description="Helical" evidence="1">
    <location>
        <begin position="42"/>
        <end position="62"/>
    </location>
</feature>
<feature type="transmembrane region" description="Helical" evidence="1">
    <location>
        <begin position="179"/>
        <end position="199"/>
    </location>
</feature>
<feature type="transmembrane region" description="Helical" evidence="1">
    <location>
        <begin position="249"/>
        <end position="269"/>
    </location>
</feature>
<gene>
    <name type="ordered locus">MJ1254</name>
</gene>